<protein>
    <recommendedName>
        <fullName>Pheromone-binding protein Gp-9</fullName>
        <shortName>PBP</shortName>
    </recommendedName>
    <alternativeName>
        <fullName>Putative odorant-binding protein Gp-9</fullName>
    </alternativeName>
</protein>
<comment type="function">
    <text evidence="3">Colony queen number, a major feature of social organization, is associated with worker genotype for Gp-9. Colonies are headed by either a single reproductive queen (monogyne form) or multiple queens (polygyne form). Differences in worker Gp-9 genotypes between social forms may cause differences in workers' abilities to recognize queens and regulate their numbers (By similarity).</text>
</comment>
<comment type="subunit">
    <text evidence="2">Homodimer.</text>
</comment>
<comment type="subcellular location">
    <subcellularLocation>
        <location evidence="1">Secreted</location>
    </subcellularLocation>
</comment>
<comment type="similarity">
    <text evidence="4">Belongs to the PBP/GOBP family.</text>
</comment>
<gene>
    <name evidence="6" type="primary">Gp-9</name>
</gene>
<sequence length="153" mass="16806">MKTLILHICIFALVAFASASRDSAKKIGSQYDNYETCLTELSVTEDELFSIGEVTSGQHKTNHEDTELHKNGCVMQCMLEKDGLMTGADYDEEKMREDYIKETGAQPGDQRVEALNACMQETKDLEDKCDKSLILVACVLAAEAVLADSSEGA</sequence>
<proteinExistence type="inferred from homology"/>
<evidence type="ECO:0000250" key="1"/>
<evidence type="ECO:0000250" key="2">
    <source>
        <dbReference type="UniProtKB" id="P20797"/>
    </source>
</evidence>
<evidence type="ECO:0000250" key="3">
    <source>
        <dbReference type="UniProtKB" id="Q8WP90"/>
    </source>
</evidence>
<evidence type="ECO:0000255" key="4"/>
<evidence type="ECO:0000305" key="5"/>
<evidence type="ECO:0000312" key="6">
    <source>
        <dbReference type="EMBL" id="AAW80682.1"/>
    </source>
</evidence>
<keyword id="KW-0085">Behavior</keyword>
<keyword id="KW-1015">Disulfide bond</keyword>
<keyword id="KW-0589">Pheromone response</keyword>
<keyword id="KW-0590">Pheromone-binding</keyword>
<keyword id="KW-0964">Secreted</keyword>
<keyword id="KW-0732">Signal</keyword>
<keyword id="KW-0813">Transport</keyword>
<accession>Q5EP16</accession>
<name>PBGP9_SOLNG</name>
<organism>
    <name type="scientific">Solenopsis nigella gensterblumi</name>
    <name type="common">Fire ant</name>
    <dbReference type="NCBI Taxonomy" id="310432"/>
    <lineage>
        <taxon>Eukaryota</taxon>
        <taxon>Metazoa</taxon>
        <taxon>Ecdysozoa</taxon>
        <taxon>Arthropoda</taxon>
        <taxon>Hexapoda</taxon>
        <taxon>Insecta</taxon>
        <taxon>Pterygota</taxon>
        <taxon>Neoptera</taxon>
        <taxon>Endopterygota</taxon>
        <taxon>Hymenoptera</taxon>
        <taxon>Apocrita</taxon>
        <taxon>Aculeata</taxon>
        <taxon>Formicoidea</taxon>
        <taxon>Formicidae</taxon>
        <taxon>Myrmicinae</taxon>
        <taxon>Solenopsis</taxon>
    </lineage>
</organism>
<dbReference type="EMBL" id="AY818615">
    <property type="protein sequence ID" value="AAW80682.1"/>
    <property type="molecule type" value="Genomic_DNA"/>
</dbReference>
<dbReference type="SMR" id="Q5EP16"/>
<dbReference type="GO" id="GO:0005615">
    <property type="term" value="C:extracellular space"/>
    <property type="evidence" value="ECO:0000250"/>
    <property type="project" value="UniProtKB"/>
</dbReference>
<dbReference type="GO" id="GO:0005550">
    <property type="term" value="F:pheromone binding"/>
    <property type="evidence" value="ECO:0007669"/>
    <property type="project" value="UniProtKB-KW"/>
</dbReference>
<dbReference type="GO" id="GO:0019236">
    <property type="term" value="P:response to pheromone"/>
    <property type="evidence" value="ECO:0007669"/>
    <property type="project" value="UniProtKB-KW"/>
</dbReference>
<dbReference type="GO" id="GO:0035176">
    <property type="term" value="P:social behavior"/>
    <property type="evidence" value="ECO:0000250"/>
    <property type="project" value="UniProtKB"/>
</dbReference>
<dbReference type="CDD" id="cd23992">
    <property type="entry name" value="PBP_GOBP"/>
    <property type="match status" value="1"/>
</dbReference>
<dbReference type="FunFam" id="1.10.238.20:FF:000004">
    <property type="entry name" value="Pheromone-binding protein Gp-9"/>
    <property type="match status" value="1"/>
</dbReference>
<dbReference type="Gene3D" id="1.10.238.20">
    <property type="entry name" value="Pheromone/general odorant binding protein domain"/>
    <property type="match status" value="1"/>
</dbReference>
<dbReference type="InterPro" id="IPR006170">
    <property type="entry name" value="PBP/GOBP"/>
</dbReference>
<dbReference type="InterPro" id="IPR036728">
    <property type="entry name" value="PBP_GOBP_sf"/>
</dbReference>
<dbReference type="InterPro" id="IPR022354">
    <property type="entry name" value="Pheromone-bd_protein_Gp-9"/>
</dbReference>
<dbReference type="Pfam" id="PF01395">
    <property type="entry name" value="PBP_GOBP"/>
    <property type="match status" value="1"/>
</dbReference>
<dbReference type="PRINTS" id="PR02007">
    <property type="entry name" value="ODORANTBPGP9"/>
</dbReference>
<dbReference type="SUPFAM" id="SSF47565">
    <property type="entry name" value="Insect pheromone/odorant-binding proteins"/>
    <property type="match status" value="1"/>
</dbReference>
<feature type="signal peptide" evidence="3">
    <location>
        <begin position="1"/>
        <end position="19"/>
    </location>
</feature>
<feature type="chain" id="PRO_5000094259" description="Pheromone-binding protein Gp-9" evidence="3">
    <location>
        <begin position="20"/>
        <end position="153"/>
    </location>
</feature>
<feature type="disulfide bond" evidence="2">
    <location>
        <begin position="37"/>
        <end position="77"/>
    </location>
</feature>
<feature type="disulfide bond" evidence="2">
    <location>
        <begin position="73"/>
        <end position="129"/>
    </location>
</feature>
<feature type="disulfide bond" evidence="2">
    <location>
        <begin position="118"/>
        <end position="138"/>
    </location>
</feature>
<reference evidence="5 6" key="1">
    <citation type="journal article" date="2005" name="Mol. Biol. Evol.">
        <title>Molecular evolutionary analyses of the odorant-binding protein gene Gp-9 in fire ants and other Solenopsis species.</title>
        <authorList>
            <person name="Krieger M.J.B."/>
            <person name="Ross K.G."/>
        </authorList>
    </citation>
    <scope>NUCLEOTIDE SEQUENCE [GENOMIC DNA] (ALLELE B)</scope>
</reference>